<accession>C4ZZG7</accession>
<proteinExistence type="inferred from homology"/>
<protein>
    <recommendedName>
        <fullName evidence="1">UPF0181 protein YoaH</fullName>
    </recommendedName>
</protein>
<feature type="chain" id="PRO_1000206571" description="UPF0181 protein YoaH">
    <location>
        <begin position="1"/>
        <end position="59"/>
    </location>
</feature>
<gene>
    <name evidence="1" type="primary">yoaH</name>
    <name type="ordered locus">BWG_1624</name>
</gene>
<reference key="1">
    <citation type="journal article" date="2009" name="J. Bacteriol.">
        <title>Genomic sequencing reveals regulatory mutations and recombinational events in the widely used MC4100 lineage of Escherichia coli K-12.</title>
        <authorList>
            <person name="Ferenci T."/>
            <person name="Zhou Z."/>
            <person name="Betteridge T."/>
            <person name="Ren Y."/>
            <person name="Liu Y."/>
            <person name="Feng L."/>
            <person name="Reeves P.R."/>
            <person name="Wang L."/>
        </authorList>
    </citation>
    <scope>NUCLEOTIDE SEQUENCE [LARGE SCALE GENOMIC DNA]</scope>
    <source>
        <strain>K12 / MC4100 / BW2952</strain>
    </source>
</reference>
<evidence type="ECO:0000255" key="1">
    <source>
        <dbReference type="HAMAP-Rule" id="MF_00507"/>
    </source>
</evidence>
<dbReference type="EMBL" id="CP001396">
    <property type="protein sequence ID" value="ACR62326.1"/>
    <property type="molecule type" value="Genomic_DNA"/>
</dbReference>
<dbReference type="RefSeq" id="WP_000457334.1">
    <property type="nucleotide sequence ID" value="NC_012759.1"/>
</dbReference>
<dbReference type="SMR" id="C4ZZG7"/>
<dbReference type="KEGG" id="ebw:BWG_1624"/>
<dbReference type="HOGENOM" id="CLU_185263_0_0_6"/>
<dbReference type="HAMAP" id="MF_00507">
    <property type="entry name" value="UPF0181"/>
    <property type="match status" value="1"/>
</dbReference>
<dbReference type="InterPro" id="IPR005371">
    <property type="entry name" value="UPF0181"/>
</dbReference>
<dbReference type="NCBIfam" id="NF003476">
    <property type="entry name" value="PRK05114.1"/>
    <property type="match status" value="1"/>
</dbReference>
<dbReference type="Pfam" id="PF03701">
    <property type="entry name" value="UPF0181"/>
    <property type="match status" value="1"/>
</dbReference>
<organism>
    <name type="scientific">Escherichia coli (strain K12 / MC4100 / BW2952)</name>
    <dbReference type="NCBI Taxonomy" id="595496"/>
    <lineage>
        <taxon>Bacteria</taxon>
        <taxon>Pseudomonadati</taxon>
        <taxon>Pseudomonadota</taxon>
        <taxon>Gammaproteobacteria</taxon>
        <taxon>Enterobacterales</taxon>
        <taxon>Enterobacteriaceae</taxon>
        <taxon>Escherichia</taxon>
    </lineage>
</organism>
<comment type="similarity">
    <text evidence="1">Belongs to the UPF0181 family.</text>
</comment>
<name>YOAH_ECOBW</name>
<sequence>MFAGLPSLTHEQQQKAVERIQELMAQGMSSGQAIALVAEELRANHSGERIVARFEDEDE</sequence>